<comment type="function">
    <text evidence="1">The beta subunit is responsible for the synthesis of L-tryptophan from indole and L-serine.</text>
</comment>
<comment type="catalytic activity">
    <reaction evidence="1">
        <text>(1S,2R)-1-C-(indol-3-yl)glycerol 3-phosphate + L-serine = D-glyceraldehyde 3-phosphate + L-tryptophan + H2O</text>
        <dbReference type="Rhea" id="RHEA:10532"/>
        <dbReference type="ChEBI" id="CHEBI:15377"/>
        <dbReference type="ChEBI" id="CHEBI:33384"/>
        <dbReference type="ChEBI" id="CHEBI:57912"/>
        <dbReference type="ChEBI" id="CHEBI:58866"/>
        <dbReference type="ChEBI" id="CHEBI:59776"/>
        <dbReference type="EC" id="4.2.1.20"/>
    </reaction>
</comment>
<comment type="cofactor">
    <cofactor evidence="1">
        <name>pyridoxal 5'-phosphate</name>
        <dbReference type="ChEBI" id="CHEBI:597326"/>
    </cofactor>
</comment>
<comment type="pathway">
    <text evidence="1">Amino-acid biosynthesis; L-tryptophan biosynthesis; L-tryptophan from chorismate: step 5/5.</text>
</comment>
<comment type="subunit">
    <text evidence="1">Tetramer of two alpha and two beta chains.</text>
</comment>
<comment type="similarity">
    <text evidence="1">Belongs to the TrpB family.</text>
</comment>
<gene>
    <name evidence="1" type="primary">trpB</name>
    <name type="ordered locus">Sfri_1425</name>
</gene>
<organism>
    <name type="scientific">Shewanella frigidimarina (strain NCIMB 400)</name>
    <dbReference type="NCBI Taxonomy" id="318167"/>
    <lineage>
        <taxon>Bacteria</taxon>
        <taxon>Pseudomonadati</taxon>
        <taxon>Pseudomonadota</taxon>
        <taxon>Gammaproteobacteria</taxon>
        <taxon>Alteromonadales</taxon>
        <taxon>Shewanellaceae</taxon>
        <taxon>Shewanella</taxon>
    </lineage>
</organism>
<proteinExistence type="inferred from homology"/>
<reference key="1">
    <citation type="submission" date="2006-08" db="EMBL/GenBank/DDBJ databases">
        <title>Complete sequence of Shewanella frigidimarina NCIMB 400.</title>
        <authorList>
            <consortium name="US DOE Joint Genome Institute"/>
            <person name="Copeland A."/>
            <person name="Lucas S."/>
            <person name="Lapidus A."/>
            <person name="Barry K."/>
            <person name="Detter J.C."/>
            <person name="Glavina del Rio T."/>
            <person name="Hammon N."/>
            <person name="Israni S."/>
            <person name="Dalin E."/>
            <person name="Tice H."/>
            <person name="Pitluck S."/>
            <person name="Fredrickson J.K."/>
            <person name="Kolker E."/>
            <person name="McCuel L.A."/>
            <person name="DiChristina T."/>
            <person name="Nealson K.H."/>
            <person name="Newman D."/>
            <person name="Tiedje J.M."/>
            <person name="Zhou J."/>
            <person name="Romine M.F."/>
            <person name="Culley D.E."/>
            <person name="Serres M."/>
            <person name="Chertkov O."/>
            <person name="Brettin T."/>
            <person name="Bruce D."/>
            <person name="Han C."/>
            <person name="Tapia R."/>
            <person name="Gilna P."/>
            <person name="Schmutz J."/>
            <person name="Larimer F."/>
            <person name="Land M."/>
            <person name="Hauser L."/>
            <person name="Kyrpides N."/>
            <person name="Mikhailova N."/>
            <person name="Richardson P."/>
        </authorList>
    </citation>
    <scope>NUCLEOTIDE SEQUENCE [LARGE SCALE GENOMIC DNA]</scope>
    <source>
        <strain>NCIMB 400</strain>
    </source>
</reference>
<dbReference type="EC" id="4.2.1.20" evidence="1"/>
<dbReference type="EMBL" id="CP000447">
    <property type="protein sequence ID" value="ABI71277.1"/>
    <property type="molecule type" value="Genomic_DNA"/>
</dbReference>
<dbReference type="RefSeq" id="WP_011636898.1">
    <property type="nucleotide sequence ID" value="NC_008345.1"/>
</dbReference>
<dbReference type="SMR" id="Q084N8"/>
<dbReference type="STRING" id="318167.Sfri_1425"/>
<dbReference type="KEGG" id="sfr:Sfri_1425"/>
<dbReference type="eggNOG" id="COG0133">
    <property type="taxonomic scope" value="Bacteria"/>
</dbReference>
<dbReference type="HOGENOM" id="CLU_016734_3_1_6"/>
<dbReference type="OrthoDB" id="9766131at2"/>
<dbReference type="UniPathway" id="UPA00035">
    <property type="reaction ID" value="UER00044"/>
</dbReference>
<dbReference type="Proteomes" id="UP000000684">
    <property type="component" value="Chromosome"/>
</dbReference>
<dbReference type="GO" id="GO:0005737">
    <property type="term" value="C:cytoplasm"/>
    <property type="evidence" value="ECO:0007669"/>
    <property type="project" value="TreeGrafter"/>
</dbReference>
<dbReference type="GO" id="GO:0004834">
    <property type="term" value="F:tryptophan synthase activity"/>
    <property type="evidence" value="ECO:0007669"/>
    <property type="project" value="UniProtKB-UniRule"/>
</dbReference>
<dbReference type="CDD" id="cd06446">
    <property type="entry name" value="Trp-synth_B"/>
    <property type="match status" value="1"/>
</dbReference>
<dbReference type="FunFam" id="3.40.50.1100:FF:000001">
    <property type="entry name" value="Tryptophan synthase beta chain"/>
    <property type="match status" value="1"/>
</dbReference>
<dbReference type="FunFam" id="3.40.50.1100:FF:000004">
    <property type="entry name" value="Tryptophan synthase beta chain"/>
    <property type="match status" value="1"/>
</dbReference>
<dbReference type="Gene3D" id="3.40.50.1100">
    <property type="match status" value="2"/>
</dbReference>
<dbReference type="HAMAP" id="MF_00133">
    <property type="entry name" value="Trp_synth_beta"/>
    <property type="match status" value="1"/>
</dbReference>
<dbReference type="InterPro" id="IPR006653">
    <property type="entry name" value="Trp_synth_b_CS"/>
</dbReference>
<dbReference type="InterPro" id="IPR006654">
    <property type="entry name" value="Trp_synth_beta"/>
</dbReference>
<dbReference type="InterPro" id="IPR023026">
    <property type="entry name" value="Trp_synth_beta/beta-like"/>
</dbReference>
<dbReference type="InterPro" id="IPR001926">
    <property type="entry name" value="TrpB-like_PALP"/>
</dbReference>
<dbReference type="InterPro" id="IPR036052">
    <property type="entry name" value="TrpB-like_PALP_sf"/>
</dbReference>
<dbReference type="NCBIfam" id="TIGR00263">
    <property type="entry name" value="trpB"/>
    <property type="match status" value="1"/>
</dbReference>
<dbReference type="PANTHER" id="PTHR48077:SF3">
    <property type="entry name" value="TRYPTOPHAN SYNTHASE"/>
    <property type="match status" value="1"/>
</dbReference>
<dbReference type="PANTHER" id="PTHR48077">
    <property type="entry name" value="TRYPTOPHAN SYNTHASE-RELATED"/>
    <property type="match status" value="1"/>
</dbReference>
<dbReference type="Pfam" id="PF00291">
    <property type="entry name" value="PALP"/>
    <property type="match status" value="1"/>
</dbReference>
<dbReference type="PIRSF" id="PIRSF001413">
    <property type="entry name" value="Trp_syn_beta"/>
    <property type="match status" value="1"/>
</dbReference>
<dbReference type="SUPFAM" id="SSF53686">
    <property type="entry name" value="Tryptophan synthase beta subunit-like PLP-dependent enzymes"/>
    <property type="match status" value="1"/>
</dbReference>
<dbReference type="PROSITE" id="PS00168">
    <property type="entry name" value="TRP_SYNTHASE_BETA"/>
    <property type="match status" value="1"/>
</dbReference>
<sequence>MTELKLNPYFGEYGGMYVPQILVPALKQLETAFVEAQQDESFIAEFTDLLKNYAGRPTALTLTRNLSPNPLVKIYLKREDLLHGGAHKTNQVLGQALLAKRMGKKEIIAETGAGQHGVATALACALLGLKCKVYMGAKDIERQSPNVFRMKLMGAEVIPVTSGSSTLKDACNEAMRDWSASYDKAHYLLGTAAGPHPFPTIVREFQRMIGEETKKQILEKEGRLPDAVIACVGGGSNAIGMFADFIDEPSVELIGVEPAGKGIDTPMHGAPLKHGKTGIFFGMKSPLMQNSDGQIEESYSVSAGLDFPSVGPQHAHLNAIGRARYESATDDEALEMFQTLARCEGIIPALESAHALAYAVRMAKEATKETILVVNLSGRGDKDIFTVADILEAKQKQQESGNE</sequence>
<feature type="chain" id="PRO_1000018389" description="Tryptophan synthase beta chain">
    <location>
        <begin position="1"/>
        <end position="403"/>
    </location>
</feature>
<feature type="modified residue" description="N6-(pyridoxal phosphate)lysine" evidence="1">
    <location>
        <position position="88"/>
    </location>
</feature>
<evidence type="ECO:0000255" key="1">
    <source>
        <dbReference type="HAMAP-Rule" id="MF_00133"/>
    </source>
</evidence>
<keyword id="KW-0028">Amino-acid biosynthesis</keyword>
<keyword id="KW-0057">Aromatic amino acid biosynthesis</keyword>
<keyword id="KW-0456">Lyase</keyword>
<keyword id="KW-0663">Pyridoxal phosphate</keyword>
<keyword id="KW-1185">Reference proteome</keyword>
<keyword id="KW-0822">Tryptophan biosynthesis</keyword>
<protein>
    <recommendedName>
        <fullName evidence="1">Tryptophan synthase beta chain</fullName>
        <ecNumber evidence="1">4.2.1.20</ecNumber>
    </recommendedName>
</protein>
<name>TRPB_SHEFN</name>
<accession>Q084N8</accession>